<evidence type="ECO:0000255" key="1">
    <source>
        <dbReference type="HAMAP-Rule" id="MF_01306"/>
    </source>
</evidence>
<evidence type="ECO:0000256" key="2">
    <source>
        <dbReference type="SAM" id="MobiDB-lite"/>
    </source>
</evidence>
<evidence type="ECO:0000305" key="3"/>
<name>RS4_MYCUA</name>
<keyword id="KW-0687">Ribonucleoprotein</keyword>
<keyword id="KW-0689">Ribosomal protein</keyword>
<keyword id="KW-0694">RNA-binding</keyword>
<keyword id="KW-0699">rRNA-binding</keyword>
<organism>
    <name type="scientific">Mycobacterium ulcerans (strain Agy99)</name>
    <dbReference type="NCBI Taxonomy" id="362242"/>
    <lineage>
        <taxon>Bacteria</taxon>
        <taxon>Bacillati</taxon>
        <taxon>Actinomycetota</taxon>
        <taxon>Actinomycetes</taxon>
        <taxon>Mycobacteriales</taxon>
        <taxon>Mycobacteriaceae</taxon>
        <taxon>Mycobacterium</taxon>
        <taxon>Mycobacterium ulcerans group</taxon>
    </lineage>
</organism>
<comment type="function">
    <text evidence="1">One of the primary rRNA binding proteins, it binds directly to 16S rRNA where it nucleates assembly of the body of the 30S subunit.</text>
</comment>
<comment type="function">
    <text evidence="1">With S5 and S12 plays an important role in translational accuracy.</text>
</comment>
<comment type="subunit">
    <text evidence="1">Part of the 30S ribosomal subunit. Contacts protein S5. The interaction surface between S4 and S5 is involved in control of translational fidelity.</text>
</comment>
<comment type="similarity">
    <text evidence="1">Belongs to the universal ribosomal protein uS4 family.</text>
</comment>
<reference key="1">
    <citation type="journal article" date="2007" name="Genome Res.">
        <title>Reductive evolution and niche adaptation inferred from the genome of Mycobacterium ulcerans, the causative agent of Buruli ulcer.</title>
        <authorList>
            <person name="Stinear T.P."/>
            <person name="Seemann T."/>
            <person name="Pidot S."/>
            <person name="Frigui W."/>
            <person name="Reysset G."/>
            <person name="Garnier T."/>
            <person name="Meurice G."/>
            <person name="Simon D."/>
            <person name="Bouchier C."/>
            <person name="Ma L."/>
            <person name="Tichit M."/>
            <person name="Porter J.L."/>
            <person name="Ryan J."/>
            <person name="Johnson P.D.R."/>
            <person name="Davies J.K."/>
            <person name="Jenkin G.A."/>
            <person name="Small P.L.C."/>
            <person name="Jones L.M."/>
            <person name="Tekaia F."/>
            <person name="Laval F."/>
            <person name="Daffe M."/>
            <person name="Parkhill J."/>
            <person name="Cole S.T."/>
        </authorList>
    </citation>
    <scope>NUCLEOTIDE SEQUENCE [LARGE SCALE GENOMIC DNA]</scope>
    <source>
        <strain>Agy99</strain>
    </source>
</reference>
<dbReference type="EMBL" id="CP000325">
    <property type="protein sequence ID" value="ABL03485.1"/>
    <property type="molecule type" value="Genomic_DNA"/>
</dbReference>
<dbReference type="RefSeq" id="WP_011739108.1">
    <property type="nucleotide sequence ID" value="NC_008611.1"/>
</dbReference>
<dbReference type="SMR" id="A0PMB6"/>
<dbReference type="KEGG" id="mul:MUL_0847"/>
<dbReference type="eggNOG" id="COG0522">
    <property type="taxonomic scope" value="Bacteria"/>
</dbReference>
<dbReference type="HOGENOM" id="CLU_092403_0_2_11"/>
<dbReference type="Proteomes" id="UP000000765">
    <property type="component" value="Chromosome"/>
</dbReference>
<dbReference type="GO" id="GO:0015935">
    <property type="term" value="C:small ribosomal subunit"/>
    <property type="evidence" value="ECO:0007669"/>
    <property type="project" value="InterPro"/>
</dbReference>
<dbReference type="GO" id="GO:0019843">
    <property type="term" value="F:rRNA binding"/>
    <property type="evidence" value="ECO:0007669"/>
    <property type="project" value="UniProtKB-UniRule"/>
</dbReference>
<dbReference type="GO" id="GO:0003735">
    <property type="term" value="F:structural constituent of ribosome"/>
    <property type="evidence" value="ECO:0007669"/>
    <property type="project" value="InterPro"/>
</dbReference>
<dbReference type="GO" id="GO:0042274">
    <property type="term" value="P:ribosomal small subunit biogenesis"/>
    <property type="evidence" value="ECO:0007669"/>
    <property type="project" value="TreeGrafter"/>
</dbReference>
<dbReference type="GO" id="GO:0006412">
    <property type="term" value="P:translation"/>
    <property type="evidence" value="ECO:0007669"/>
    <property type="project" value="UniProtKB-UniRule"/>
</dbReference>
<dbReference type="CDD" id="cd00165">
    <property type="entry name" value="S4"/>
    <property type="match status" value="1"/>
</dbReference>
<dbReference type="FunFam" id="3.10.290.10:FF:000001">
    <property type="entry name" value="30S ribosomal protein S4"/>
    <property type="match status" value="1"/>
</dbReference>
<dbReference type="Gene3D" id="1.10.1050.10">
    <property type="entry name" value="Ribosomal Protein S4 Delta 41, Chain A, domain 1"/>
    <property type="match status" value="1"/>
</dbReference>
<dbReference type="Gene3D" id="3.10.290.10">
    <property type="entry name" value="RNA-binding S4 domain"/>
    <property type="match status" value="1"/>
</dbReference>
<dbReference type="HAMAP" id="MF_01306_B">
    <property type="entry name" value="Ribosomal_uS4_B"/>
    <property type="match status" value="1"/>
</dbReference>
<dbReference type="InterPro" id="IPR022801">
    <property type="entry name" value="Ribosomal_uS4"/>
</dbReference>
<dbReference type="InterPro" id="IPR005709">
    <property type="entry name" value="Ribosomal_uS4_bac-type"/>
</dbReference>
<dbReference type="InterPro" id="IPR018079">
    <property type="entry name" value="Ribosomal_uS4_CS"/>
</dbReference>
<dbReference type="InterPro" id="IPR001912">
    <property type="entry name" value="Ribosomal_uS4_N"/>
</dbReference>
<dbReference type="InterPro" id="IPR002942">
    <property type="entry name" value="S4_RNA-bd"/>
</dbReference>
<dbReference type="InterPro" id="IPR036986">
    <property type="entry name" value="S4_RNA-bd_sf"/>
</dbReference>
<dbReference type="NCBIfam" id="NF003717">
    <property type="entry name" value="PRK05327.1"/>
    <property type="match status" value="1"/>
</dbReference>
<dbReference type="NCBIfam" id="TIGR01017">
    <property type="entry name" value="rpsD_bact"/>
    <property type="match status" value="1"/>
</dbReference>
<dbReference type="PANTHER" id="PTHR11831">
    <property type="entry name" value="30S 40S RIBOSOMAL PROTEIN"/>
    <property type="match status" value="1"/>
</dbReference>
<dbReference type="PANTHER" id="PTHR11831:SF4">
    <property type="entry name" value="SMALL RIBOSOMAL SUBUNIT PROTEIN US4M"/>
    <property type="match status" value="1"/>
</dbReference>
<dbReference type="Pfam" id="PF00163">
    <property type="entry name" value="Ribosomal_S4"/>
    <property type="match status" value="1"/>
</dbReference>
<dbReference type="Pfam" id="PF01479">
    <property type="entry name" value="S4"/>
    <property type="match status" value="1"/>
</dbReference>
<dbReference type="SMART" id="SM01390">
    <property type="entry name" value="Ribosomal_S4"/>
    <property type="match status" value="1"/>
</dbReference>
<dbReference type="SMART" id="SM00363">
    <property type="entry name" value="S4"/>
    <property type="match status" value="1"/>
</dbReference>
<dbReference type="SUPFAM" id="SSF55174">
    <property type="entry name" value="Alpha-L RNA-binding motif"/>
    <property type="match status" value="1"/>
</dbReference>
<dbReference type="PROSITE" id="PS00632">
    <property type="entry name" value="RIBOSOMAL_S4"/>
    <property type="match status" value="1"/>
</dbReference>
<dbReference type="PROSITE" id="PS50889">
    <property type="entry name" value="S4"/>
    <property type="match status" value="1"/>
</dbReference>
<gene>
    <name evidence="1" type="primary">rpsD</name>
    <name type="ordered locus">MUL_0847</name>
</gene>
<proteinExistence type="inferred from homology"/>
<sequence>MARYTGPVTRKSRRLGTDLVGGDQSFEKRPYPPGQHGRARIKDSEYRQQLQEKQKARFTYGVMEKQFRRYYEEAVRHSGKTGEELLKILESRLDNVVYRAGLARTRRMARQLVSHGHFSVNGVHVNVPSYRVSQYDIIDVRDNSLNTVPFQIARETAGDRPIPSWLQVVGGRQRILIHQLPERAQIEVPLTEQLIVEYYSK</sequence>
<feature type="chain" id="PRO_0000293319" description="Small ribosomal subunit protein uS4">
    <location>
        <begin position="1"/>
        <end position="201"/>
    </location>
</feature>
<feature type="domain" description="S4 RNA-binding" evidence="1">
    <location>
        <begin position="91"/>
        <end position="157"/>
    </location>
</feature>
<feature type="region of interest" description="Disordered" evidence="2">
    <location>
        <begin position="1"/>
        <end position="42"/>
    </location>
</feature>
<protein>
    <recommendedName>
        <fullName evidence="1">Small ribosomal subunit protein uS4</fullName>
    </recommendedName>
    <alternativeName>
        <fullName evidence="3">30S ribosomal protein S4</fullName>
    </alternativeName>
</protein>
<accession>A0PMB6</accession>